<organism>
    <name type="scientific">Burkholderia pseudomallei (strain 668)</name>
    <dbReference type="NCBI Taxonomy" id="320373"/>
    <lineage>
        <taxon>Bacteria</taxon>
        <taxon>Pseudomonadati</taxon>
        <taxon>Pseudomonadota</taxon>
        <taxon>Betaproteobacteria</taxon>
        <taxon>Burkholderiales</taxon>
        <taxon>Burkholderiaceae</taxon>
        <taxon>Burkholderia</taxon>
        <taxon>pseudomallei group</taxon>
    </lineage>
</organism>
<accession>A3NBU3</accession>
<reference key="1">
    <citation type="journal article" date="2010" name="Genome Biol. Evol.">
        <title>Continuing evolution of Burkholderia mallei through genome reduction and large-scale rearrangements.</title>
        <authorList>
            <person name="Losada L."/>
            <person name="Ronning C.M."/>
            <person name="DeShazer D."/>
            <person name="Woods D."/>
            <person name="Fedorova N."/>
            <person name="Kim H.S."/>
            <person name="Shabalina S.A."/>
            <person name="Pearson T.R."/>
            <person name="Brinkac L."/>
            <person name="Tan P."/>
            <person name="Nandi T."/>
            <person name="Crabtree J."/>
            <person name="Badger J."/>
            <person name="Beckstrom-Sternberg S."/>
            <person name="Saqib M."/>
            <person name="Schutzer S.E."/>
            <person name="Keim P."/>
            <person name="Nierman W.C."/>
        </authorList>
    </citation>
    <scope>NUCLEOTIDE SEQUENCE [LARGE SCALE GENOMIC DNA]</scope>
    <source>
        <strain>668</strain>
    </source>
</reference>
<evidence type="ECO:0000255" key="1">
    <source>
        <dbReference type="HAMAP-Rule" id="MF_00019"/>
    </source>
</evidence>
<evidence type="ECO:0000256" key="2">
    <source>
        <dbReference type="SAM" id="MobiDB-lite"/>
    </source>
</evidence>
<name>PLSX_BURP6</name>
<feature type="chain" id="PRO_1000001734" description="Phosphate acyltransferase">
    <location>
        <begin position="1"/>
        <end position="368"/>
    </location>
</feature>
<feature type="region of interest" description="Disordered" evidence="2">
    <location>
        <begin position="334"/>
        <end position="368"/>
    </location>
</feature>
<gene>
    <name evidence="1" type="primary">plsX</name>
    <name type="ordered locus">BURPS668_2793</name>
</gene>
<dbReference type="EC" id="2.3.1.274" evidence="1"/>
<dbReference type="EMBL" id="CP000570">
    <property type="protein sequence ID" value="ABN84131.1"/>
    <property type="molecule type" value="Genomic_DNA"/>
</dbReference>
<dbReference type="RefSeq" id="WP_004192749.1">
    <property type="nucleotide sequence ID" value="NC_009074.1"/>
</dbReference>
<dbReference type="SMR" id="A3NBU3"/>
<dbReference type="GeneID" id="93061023"/>
<dbReference type="KEGG" id="bpd:BURPS668_2793"/>
<dbReference type="HOGENOM" id="CLU_039379_1_0_4"/>
<dbReference type="UniPathway" id="UPA00085"/>
<dbReference type="GO" id="GO:0005737">
    <property type="term" value="C:cytoplasm"/>
    <property type="evidence" value="ECO:0007669"/>
    <property type="project" value="UniProtKB-SubCell"/>
</dbReference>
<dbReference type="GO" id="GO:0043811">
    <property type="term" value="F:phosphate:acyl-[acyl carrier protein] acyltransferase activity"/>
    <property type="evidence" value="ECO:0007669"/>
    <property type="project" value="UniProtKB-UniRule"/>
</dbReference>
<dbReference type="GO" id="GO:0006633">
    <property type="term" value="P:fatty acid biosynthetic process"/>
    <property type="evidence" value="ECO:0007669"/>
    <property type="project" value="UniProtKB-UniRule"/>
</dbReference>
<dbReference type="GO" id="GO:0008654">
    <property type="term" value="P:phospholipid biosynthetic process"/>
    <property type="evidence" value="ECO:0007669"/>
    <property type="project" value="UniProtKB-KW"/>
</dbReference>
<dbReference type="Gene3D" id="3.40.718.10">
    <property type="entry name" value="Isopropylmalate Dehydrogenase"/>
    <property type="match status" value="1"/>
</dbReference>
<dbReference type="HAMAP" id="MF_00019">
    <property type="entry name" value="PlsX"/>
    <property type="match status" value="1"/>
</dbReference>
<dbReference type="InterPro" id="IPR003664">
    <property type="entry name" value="FA_synthesis"/>
</dbReference>
<dbReference type="InterPro" id="IPR012281">
    <property type="entry name" value="Phospholipid_synth_PlsX-like"/>
</dbReference>
<dbReference type="NCBIfam" id="TIGR00182">
    <property type="entry name" value="plsX"/>
    <property type="match status" value="1"/>
</dbReference>
<dbReference type="PANTHER" id="PTHR30100">
    <property type="entry name" value="FATTY ACID/PHOSPHOLIPID SYNTHESIS PROTEIN PLSX"/>
    <property type="match status" value="1"/>
</dbReference>
<dbReference type="PANTHER" id="PTHR30100:SF1">
    <property type="entry name" value="PHOSPHATE ACYLTRANSFERASE"/>
    <property type="match status" value="1"/>
</dbReference>
<dbReference type="Pfam" id="PF02504">
    <property type="entry name" value="FA_synthesis"/>
    <property type="match status" value="1"/>
</dbReference>
<dbReference type="PIRSF" id="PIRSF002465">
    <property type="entry name" value="Phsphlp_syn_PlsX"/>
    <property type="match status" value="1"/>
</dbReference>
<dbReference type="SUPFAM" id="SSF53659">
    <property type="entry name" value="Isocitrate/Isopropylmalate dehydrogenase-like"/>
    <property type="match status" value="1"/>
</dbReference>
<proteinExistence type="inferred from homology"/>
<sequence length="368" mass="38940">MTVKLTIDCMGGDHGPSVTVPAAVKFVRSHPDAHLMLVGIESAIRAQLKKCKALGEPALSVVPATEVVAMDDPVEVALRKKKDSSMRVALNHVKEGAAQACISAGNTGALMAVSRYVLKTLPGIERPAIAFALPNPTGYTMMLDLGANVDCEPQHLLQFAEMGHALVAALEGKERPTIGLLNIGEEVIKGNETIKRAGELLRASTLNFRGNVEGNDIYKGTVDVIVCDGFVGNVALKTSEGLAQMLADIIKEEFSRSLLSKLMAILALPVLLRFKKRVDHRQYNGAALLGLRSLVIKSHGSADAYAFEWAIKRGYDAVKNGVLERLSRAMAENAAPLGESGRDANGAGQASPSAGQPAEPSAALSSKT</sequence>
<keyword id="KW-0963">Cytoplasm</keyword>
<keyword id="KW-0444">Lipid biosynthesis</keyword>
<keyword id="KW-0443">Lipid metabolism</keyword>
<keyword id="KW-0594">Phospholipid biosynthesis</keyword>
<keyword id="KW-1208">Phospholipid metabolism</keyword>
<keyword id="KW-0808">Transferase</keyword>
<comment type="function">
    <text evidence="1">Catalyzes the reversible formation of acyl-phosphate (acyl-PO(4)) from acyl-[acyl-carrier-protein] (acyl-ACP). This enzyme utilizes acyl-ACP as fatty acyl donor, but not acyl-CoA.</text>
</comment>
<comment type="catalytic activity">
    <reaction evidence="1">
        <text>a fatty acyl-[ACP] + phosphate = an acyl phosphate + holo-[ACP]</text>
        <dbReference type="Rhea" id="RHEA:42292"/>
        <dbReference type="Rhea" id="RHEA-COMP:9685"/>
        <dbReference type="Rhea" id="RHEA-COMP:14125"/>
        <dbReference type="ChEBI" id="CHEBI:43474"/>
        <dbReference type="ChEBI" id="CHEBI:59918"/>
        <dbReference type="ChEBI" id="CHEBI:64479"/>
        <dbReference type="ChEBI" id="CHEBI:138651"/>
        <dbReference type="EC" id="2.3.1.274"/>
    </reaction>
</comment>
<comment type="pathway">
    <text evidence="1">Lipid metabolism; phospholipid metabolism.</text>
</comment>
<comment type="subunit">
    <text evidence="1">Homodimer. Probably interacts with PlsY.</text>
</comment>
<comment type="subcellular location">
    <subcellularLocation>
        <location evidence="1">Cytoplasm</location>
    </subcellularLocation>
    <text evidence="1">Associated with the membrane possibly through PlsY.</text>
</comment>
<comment type="similarity">
    <text evidence="1">Belongs to the PlsX family.</text>
</comment>
<protein>
    <recommendedName>
        <fullName evidence="1">Phosphate acyltransferase</fullName>
        <ecNumber evidence="1">2.3.1.274</ecNumber>
    </recommendedName>
    <alternativeName>
        <fullName evidence="1">Acyl-ACP phosphotransacylase</fullName>
    </alternativeName>
    <alternativeName>
        <fullName evidence="1">Acyl-[acyl-carrier-protein]--phosphate acyltransferase</fullName>
    </alternativeName>
    <alternativeName>
        <fullName evidence="1">Phosphate-acyl-ACP acyltransferase</fullName>
    </alternativeName>
</protein>